<keyword id="KW-0067">ATP-binding</keyword>
<keyword id="KW-0547">Nucleotide-binding</keyword>
<keyword id="KW-1185">Reference proteome</keyword>
<gene>
    <name type="primary">tbck</name>
    <name type="ORF">DDB_G0267760</name>
</gene>
<dbReference type="EMBL" id="AAFI02000003">
    <property type="protein sequence ID" value="EAL73333.1"/>
    <property type="molecule type" value="Genomic_DNA"/>
</dbReference>
<dbReference type="RefSeq" id="XP_647287.1">
    <property type="nucleotide sequence ID" value="XM_642195.1"/>
</dbReference>
<dbReference type="SMR" id="Q55G97"/>
<dbReference type="FunCoup" id="Q55G97">
    <property type="interactions" value="21"/>
</dbReference>
<dbReference type="STRING" id="44689.Q55G97"/>
<dbReference type="PaxDb" id="44689-DDB0231329"/>
<dbReference type="EnsemblProtists" id="EAL73333">
    <property type="protein sequence ID" value="EAL73333"/>
    <property type="gene ID" value="DDB_G0267760"/>
</dbReference>
<dbReference type="GeneID" id="8616093"/>
<dbReference type="KEGG" id="ddi:DDB_G0267760"/>
<dbReference type="dictyBase" id="DDB_G0267760">
    <property type="gene designation" value="tbck"/>
</dbReference>
<dbReference type="VEuPathDB" id="AmoebaDB:DDB_G0267760"/>
<dbReference type="eggNOG" id="KOG1093">
    <property type="taxonomic scope" value="Eukaryota"/>
</dbReference>
<dbReference type="HOGENOM" id="CLU_011160_0_0_1"/>
<dbReference type="InParanoid" id="Q55G97"/>
<dbReference type="OMA" id="ENENDAC"/>
<dbReference type="PhylomeDB" id="Q55G97"/>
<dbReference type="PRO" id="PR:Q55G97"/>
<dbReference type="Proteomes" id="UP000002195">
    <property type="component" value="Chromosome 1"/>
</dbReference>
<dbReference type="GO" id="GO:0005524">
    <property type="term" value="F:ATP binding"/>
    <property type="evidence" value="ECO:0007669"/>
    <property type="project" value="UniProtKB-KW"/>
</dbReference>
<dbReference type="GO" id="GO:0005096">
    <property type="term" value="F:GTPase activator activity"/>
    <property type="evidence" value="ECO:0000318"/>
    <property type="project" value="GO_Central"/>
</dbReference>
<dbReference type="GO" id="GO:0004672">
    <property type="term" value="F:protein kinase activity"/>
    <property type="evidence" value="ECO:0007669"/>
    <property type="project" value="InterPro"/>
</dbReference>
<dbReference type="CDD" id="cd00180">
    <property type="entry name" value="PKc"/>
    <property type="match status" value="1"/>
</dbReference>
<dbReference type="FunFam" id="1.10.472.80:FF:000096">
    <property type="entry name" value="GTPase activating protein, putative"/>
    <property type="match status" value="1"/>
</dbReference>
<dbReference type="FunFam" id="1.10.510.10:FF:002722">
    <property type="entry name" value="TBC domain-containing protein kinase-like protein"/>
    <property type="match status" value="1"/>
</dbReference>
<dbReference type="FunFam" id="1.10.8.270:FF:000044">
    <property type="entry name" value="TBC Kinase homolog"/>
    <property type="match status" value="1"/>
</dbReference>
<dbReference type="Gene3D" id="1.10.8.270">
    <property type="entry name" value="putative rabgap domain of human tbc1 domain family member 14 like domains"/>
    <property type="match status" value="1"/>
</dbReference>
<dbReference type="Gene3D" id="3.40.250.10">
    <property type="entry name" value="Rhodanese-like domain"/>
    <property type="match status" value="1"/>
</dbReference>
<dbReference type="Gene3D" id="1.10.510.10">
    <property type="entry name" value="Transferase(Phosphotransferase) domain 1"/>
    <property type="match status" value="1"/>
</dbReference>
<dbReference type="Gene3D" id="1.10.472.80">
    <property type="entry name" value="Ypt/Rab-GAP domain of gyp1p, domain 3"/>
    <property type="match status" value="1"/>
</dbReference>
<dbReference type="InterPro" id="IPR011009">
    <property type="entry name" value="Kinase-like_dom_sf"/>
</dbReference>
<dbReference type="InterPro" id="IPR000719">
    <property type="entry name" value="Prot_kinase_dom"/>
</dbReference>
<dbReference type="InterPro" id="IPR000195">
    <property type="entry name" value="Rab-GAP-TBC_dom"/>
</dbReference>
<dbReference type="InterPro" id="IPR035969">
    <property type="entry name" value="Rab-GAP_TBC_sf"/>
</dbReference>
<dbReference type="InterPro" id="IPR050302">
    <property type="entry name" value="Rab_GAP_TBC_domain"/>
</dbReference>
<dbReference type="InterPro" id="IPR001763">
    <property type="entry name" value="Rhodanese-like_dom"/>
</dbReference>
<dbReference type="InterPro" id="IPR036873">
    <property type="entry name" value="Rhodanese-like_dom_sf"/>
</dbReference>
<dbReference type="PANTHER" id="PTHR47219:SF9">
    <property type="entry name" value="GTPASE ACTIVATING PROTEIN AND CENTROSOME-ASSOCIATED, ISOFORM B"/>
    <property type="match status" value="1"/>
</dbReference>
<dbReference type="PANTHER" id="PTHR47219">
    <property type="entry name" value="RAB GTPASE-ACTIVATING PROTEIN 1-LIKE"/>
    <property type="match status" value="1"/>
</dbReference>
<dbReference type="Pfam" id="PF00069">
    <property type="entry name" value="Pkinase"/>
    <property type="match status" value="1"/>
</dbReference>
<dbReference type="Pfam" id="PF00566">
    <property type="entry name" value="RabGAP-TBC"/>
    <property type="match status" value="1"/>
</dbReference>
<dbReference type="Pfam" id="PF00581">
    <property type="entry name" value="Rhodanese"/>
    <property type="match status" value="1"/>
</dbReference>
<dbReference type="SMART" id="SM00220">
    <property type="entry name" value="S_TKc"/>
    <property type="match status" value="1"/>
</dbReference>
<dbReference type="SMART" id="SM00164">
    <property type="entry name" value="TBC"/>
    <property type="match status" value="1"/>
</dbReference>
<dbReference type="SUPFAM" id="SSF56112">
    <property type="entry name" value="Protein kinase-like (PK-like)"/>
    <property type="match status" value="1"/>
</dbReference>
<dbReference type="SUPFAM" id="SSF52821">
    <property type="entry name" value="Rhodanese/Cell cycle control phosphatase"/>
    <property type="match status" value="1"/>
</dbReference>
<dbReference type="SUPFAM" id="SSF47923">
    <property type="entry name" value="Ypt/Rab-GAP domain of gyp1p"/>
    <property type="match status" value="2"/>
</dbReference>
<dbReference type="PROSITE" id="PS50011">
    <property type="entry name" value="PROTEIN_KINASE_DOM"/>
    <property type="match status" value="1"/>
</dbReference>
<dbReference type="PROSITE" id="PS50086">
    <property type="entry name" value="TBC_RABGAP"/>
    <property type="match status" value="1"/>
</dbReference>
<protein>
    <recommendedName>
        <fullName>TBC domain-containing protein kinase-like protein</fullName>
    </recommendedName>
    <alternativeName>
        <fullName>RabGAP/TBC domain-containing protein</fullName>
    </alternativeName>
</protein>
<name>TBCK_DICDI</name>
<proteinExistence type="inferred from homology"/>
<accession>Q55G97</accession>
<feature type="chain" id="PRO_0000362074" description="TBC domain-containing protein kinase-like protein">
    <location>
        <begin position="1"/>
        <end position="1033"/>
    </location>
</feature>
<feature type="domain" description="Protein kinase" evidence="1">
    <location>
        <begin position="72"/>
        <end position="425"/>
    </location>
</feature>
<feature type="domain" description="Rab-GAP TBC" evidence="2">
    <location>
        <begin position="657"/>
        <end position="844"/>
    </location>
</feature>
<feature type="region of interest" description="Disordered" evidence="3">
    <location>
        <begin position="1"/>
        <end position="21"/>
    </location>
</feature>
<feature type="region of interest" description="Disordered" evidence="3">
    <location>
        <begin position="35"/>
        <end position="55"/>
    </location>
</feature>
<feature type="region of interest" description="Disordered" evidence="3">
    <location>
        <begin position="81"/>
        <end position="101"/>
    </location>
</feature>
<feature type="region of interest" description="Disordered" evidence="3">
    <location>
        <begin position="535"/>
        <end position="560"/>
    </location>
</feature>
<feature type="compositionally biased region" description="Low complexity" evidence="3">
    <location>
        <begin position="36"/>
        <end position="52"/>
    </location>
</feature>
<feature type="compositionally biased region" description="Low complexity" evidence="3">
    <location>
        <begin position="81"/>
        <end position="97"/>
    </location>
</feature>
<feature type="compositionally biased region" description="Polar residues" evidence="3">
    <location>
        <begin position="535"/>
        <end position="546"/>
    </location>
</feature>
<feature type="compositionally biased region" description="Basic residues" evidence="3">
    <location>
        <begin position="548"/>
        <end position="558"/>
    </location>
</feature>
<feature type="binding site" evidence="1">
    <location>
        <begin position="78"/>
        <end position="86"/>
    </location>
    <ligand>
        <name>ATP</name>
        <dbReference type="ChEBI" id="CHEBI:30616"/>
    </ligand>
</feature>
<feature type="binding site" evidence="1">
    <location>
        <position position="113"/>
    </location>
    <ligand>
        <name>ATP</name>
        <dbReference type="ChEBI" id="CHEBI:30616"/>
    </ligand>
</feature>
<organism>
    <name type="scientific">Dictyostelium discoideum</name>
    <name type="common">Social amoeba</name>
    <dbReference type="NCBI Taxonomy" id="44689"/>
    <lineage>
        <taxon>Eukaryota</taxon>
        <taxon>Amoebozoa</taxon>
        <taxon>Evosea</taxon>
        <taxon>Eumycetozoa</taxon>
        <taxon>Dictyostelia</taxon>
        <taxon>Dictyosteliales</taxon>
        <taxon>Dictyosteliaceae</taxon>
        <taxon>Dictyostelium</taxon>
    </lineage>
</organism>
<comment type="domain">
    <text>The protein kinase domain is predicted to be catalytically inactive.</text>
</comment>
<comment type="similarity">
    <text evidence="1">Belongs to the protein kinase superfamily. Ser/Thr protein kinase family.</text>
</comment>
<evidence type="ECO:0000255" key="1">
    <source>
        <dbReference type="PROSITE-ProRule" id="PRU00159"/>
    </source>
</evidence>
<evidence type="ECO:0000255" key="2">
    <source>
        <dbReference type="PROSITE-ProRule" id="PRU00163"/>
    </source>
</evidence>
<evidence type="ECO:0000256" key="3">
    <source>
        <dbReference type="SAM" id="MobiDB-lite"/>
    </source>
</evidence>
<reference key="1">
    <citation type="journal article" date="2005" name="Nature">
        <title>The genome of the social amoeba Dictyostelium discoideum.</title>
        <authorList>
            <person name="Eichinger L."/>
            <person name="Pachebat J.A."/>
            <person name="Gloeckner G."/>
            <person name="Rajandream M.A."/>
            <person name="Sucgang R."/>
            <person name="Berriman M."/>
            <person name="Song J."/>
            <person name="Olsen R."/>
            <person name="Szafranski K."/>
            <person name="Xu Q."/>
            <person name="Tunggal B."/>
            <person name="Kummerfeld S."/>
            <person name="Madera M."/>
            <person name="Konfortov B.A."/>
            <person name="Rivero F."/>
            <person name="Bankier A.T."/>
            <person name="Lehmann R."/>
            <person name="Hamlin N."/>
            <person name="Davies R."/>
            <person name="Gaudet P."/>
            <person name="Fey P."/>
            <person name="Pilcher K."/>
            <person name="Chen G."/>
            <person name="Saunders D."/>
            <person name="Sodergren E.J."/>
            <person name="Davis P."/>
            <person name="Kerhornou A."/>
            <person name="Nie X."/>
            <person name="Hall N."/>
            <person name="Anjard C."/>
            <person name="Hemphill L."/>
            <person name="Bason N."/>
            <person name="Farbrother P."/>
            <person name="Desany B."/>
            <person name="Just E."/>
            <person name="Morio T."/>
            <person name="Rost R."/>
            <person name="Churcher C.M."/>
            <person name="Cooper J."/>
            <person name="Haydock S."/>
            <person name="van Driessche N."/>
            <person name="Cronin A."/>
            <person name="Goodhead I."/>
            <person name="Muzny D.M."/>
            <person name="Mourier T."/>
            <person name="Pain A."/>
            <person name="Lu M."/>
            <person name="Harper D."/>
            <person name="Lindsay R."/>
            <person name="Hauser H."/>
            <person name="James K.D."/>
            <person name="Quiles M."/>
            <person name="Madan Babu M."/>
            <person name="Saito T."/>
            <person name="Buchrieser C."/>
            <person name="Wardroper A."/>
            <person name="Felder M."/>
            <person name="Thangavelu M."/>
            <person name="Johnson D."/>
            <person name="Knights A."/>
            <person name="Loulseged H."/>
            <person name="Mungall K.L."/>
            <person name="Oliver K."/>
            <person name="Price C."/>
            <person name="Quail M.A."/>
            <person name="Urushihara H."/>
            <person name="Hernandez J."/>
            <person name="Rabbinowitsch E."/>
            <person name="Steffen D."/>
            <person name="Sanders M."/>
            <person name="Ma J."/>
            <person name="Kohara Y."/>
            <person name="Sharp S."/>
            <person name="Simmonds M.N."/>
            <person name="Spiegler S."/>
            <person name="Tivey A."/>
            <person name="Sugano S."/>
            <person name="White B."/>
            <person name="Walker D."/>
            <person name="Woodward J.R."/>
            <person name="Winckler T."/>
            <person name="Tanaka Y."/>
            <person name="Shaulsky G."/>
            <person name="Schleicher M."/>
            <person name="Weinstock G.M."/>
            <person name="Rosenthal A."/>
            <person name="Cox E.C."/>
            <person name="Chisholm R.L."/>
            <person name="Gibbs R.A."/>
            <person name="Loomis W.F."/>
            <person name="Platzer M."/>
            <person name="Kay R.R."/>
            <person name="Williams J.G."/>
            <person name="Dear P.H."/>
            <person name="Noegel A.A."/>
            <person name="Barrell B.G."/>
            <person name="Kuspa A."/>
        </authorList>
    </citation>
    <scope>NUCLEOTIDE SEQUENCE [LARGE SCALE GENOMIC DNA]</scope>
    <source>
        <strain>AX4</strain>
    </source>
</reference>
<sequence length="1033" mass="118086">MMKSDEGVSGNSNNNNNYKFKDNTFRKYGVEVVAYDNNNNNNNNNNNNDDNNTVTVNSRGFHISIHPFSFRNKLTINQNNGSIGGSSSSSSTSNSVSTPKPQSFYVDDAGIAKQLNQSVFDILSRSRYLSSLSHENLAEFIAAEPSQKHHDQMLIVSEDYKNSLEKQIEIQAKRQTPIPSNTIGRYAYQILKALSYLHSQDLTHRSLSLDNIKLDDNNQIKLTNYGLYYLSDHGENVSFPIGNLLYLSPESILRGAKGSSNTKADVWALGCILLHICLGYCIWQDNNPSIVTNRILHLSGYSTTQSFNSISKSFEQCELKKTIINEKQHEEYEEYDDDEDISEEEKEKRIKDIKLNNRDNMNNFINSLKREEKENSDSNSGSSNSNIGIGLNGLGKELIEIIEQCLIPNPMDRPDSETLLDHPYFNEYKNIDPYQLQWIIKPFTKSWDLPDSLESLTLKEIESYGHIGSDNNGGGGGGGGESDSDIYSGKEIYYFWKLLGGNIEKELVNKGFAKASPSVHKLPLYVPVKASLTESTNSGLNSPQPYQHQHHQHQHQHQHPNIIKSKNSTVYNNEFCLVELSNVFLKIKESFKLYGSKVFEEGIEQSNNNNNNRFNNIENNIELQIIIIREFHKLLYQYQYDDPTLSQPKIYRLAKLFVPPILRGDIWSSILGVNEREAKQLYNSINLDVKGPNDKQFELDIPRCHQYHPLLSSRQGHVQLFKILKAWSLLNLEKGCYWQGLDNVASPFLVHHFFNEPIAFASLKAFVDKYLSILYVPNNHAALSEIMLIYQQLLAYHDPELLNHLMDIQLDPNLYSIPWFITVFAHILPIDKLEILWDSILLCPSSLPNFIAASMIIQFRDSILKMNFEDGITMMSMIPSVDVHKCVSDALSMFNKTPLSTTVTKFVSNTDQELWWMQEVPFEKRKLELFPRIDIHDLINDQQKVILDIRTPLQFQQIHYPSSINVNPKLSKLQQQMEQYKGQQIVVIAPKDQGVDFTNQLIQWKFPFVSMLNGGMDSLEHGAHSLLIISNKN</sequence>